<gene>
    <name evidence="1" type="primary">psd</name>
    <name type="ordered locus">NFA_52810</name>
</gene>
<feature type="chain" id="PRO_0000029791" description="Phosphatidylserine decarboxylase beta chain" evidence="1">
    <location>
        <begin position="1"/>
        <end position="205"/>
    </location>
</feature>
<feature type="chain" id="PRO_0000029792" description="Phosphatidylserine decarboxylase alpha chain" evidence="1">
    <location>
        <begin position="206"/>
        <end position="237"/>
    </location>
</feature>
<feature type="active site" description="Schiff-base intermediate with substrate; via pyruvic acid" evidence="1">
    <location>
        <position position="206"/>
    </location>
</feature>
<feature type="site" description="Cleavage (non-hydrolytic); by autocatalysis" evidence="1">
    <location>
        <begin position="205"/>
        <end position="206"/>
    </location>
</feature>
<feature type="modified residue" description="Pyruvic acid (Ser); by autocatalysis" evidence="1">
    <location>
        <position position="206"/>
    </location>
</feature>
<organism>
    <name type="scientific">Nocardia farcinica (strain IFM 10152)</name>
    <dbReference type="NCBI Taxonomy" id="247156"/>
    <lineage>
        <taxon>Bacteria</taxon>
        <taxon>Bacillati</taxon>
        <taxon>Actinomycetota</taxon>
        <taxon>Actinomycetes</taxon>
        <taxon>Mycobacteriales</taxon>
        <taxon>Nocardiaceae</taxon>
        <taxon>Nocardia</taxon>
    </lineage>
</organism>
<comment type="function">
    <text evidence="1">Catalyzes the formation of phosphatidylethanolamine (PtdEtn) from phosphatidylserine (PtdSer).</text>
</comment>
<comment type="catalytic activity">
    <reaction evidence="1">
        <text>a 1,2-diacyl-sn-glycero-3-phospho-L-serine + H(+) = a 1,2-diacyl-sn-glycero-3-phosphoethanolamine + CO2</text>
        <dbReference type="Rhea" id="RHEA:20828"/>
        <dbReference type="ChEBI" id="CHEBI:15378"/>
        <dbReference type="ChEBI" id="CHEBI:16526"/>
        <dbReference type="ChEBI" id="CHEBI:57262"/>
        <dbReference type="ChEBI" id="CHEBI:64612"/>
        <dbReference type="EC" id="4.1.1.65"/>
    </reaction>
</comment>
<comment type="cofactor">
    <cofactor evidence="1">
        <name>pyruvate</name>
        <dbReference type="ChEBI" id="CHEBI:15361"/>
    </cofactor>
    <text evidence="1">Binds 1 pyruvoyl group covalently per subunit.</text>
</comment>
<comment type="pathway">
    <text evidence="1">Phospholipid metabolism; phosphatidylethanolamine biosynthesis; phosphatidylethanolamine from CDP-diacylglycerol: step 2/2.</text>
</comment>
<comment type="subunit">
    <text evidence="1">Heterodimer of a large membrane-associated beta subunit and a small pyruvoyl-containing alpha subunit.</text>
</comment>
<comment type="subcellular location">
    <subcellularLocation>
        <location evidence="1">Cell membrane</location>
        <topology evidence="1">Peripheral membrane protein</topology>
    </subcellularLocation>
</comment>
<comment type="PTM">
    <text evidence="1">Is synthesized initially as an inactive proenzyme. Formation of the active enzyme involves a self-maturation process in which the active site pyruvoyl group is generated from an internal serine residue via an autocatalytic post-translational modification. Two non-identical subunits are generated from the proenzyme in this reaction, and the pyruvate is formed at the N-terminus of the alpha chain, which is derived from the carboxyl end of the proenzyme. The post-translation cleavage follows an unusual pathway, termed non-hydrolytic serinolysis, in which the side chain hydroxyl group of the serine supplies its oxygen atom to form the C-terminus of the beta chain, while the remainder of the serine residue undergoes an oxidative deamination to produce ammonia and the pyruvoyl prosthetic group on the alpha chain.</text>
</comment>
<comment type="similarity">
    <text evidence="1">Belongs to the phosphatidylserine decarboxylase family. PSD-A subfamily.</text>
</comment>
<dbReference type="EC" id="4.1.1.65" evidence="1"/>
<dbReference type="EMBL" id="AP006618">
    <property type="protein sequence ID" value="BAD60133.1"/>
    <property type="molecule type" value="Genomic_DNA"/>
</dbReference>
<dbReference type="RefSeq" id="WP_011211815.1">
    <property type="nucleotide sequence ID" value="NC_006361.1"/>
</dbReference>
<dbReference type="SMR" id="Q5YNV8"/>
<dbReference type="STRING" id="247156.NFA_52810"/>
<dbReference type="GeneID" id="61135856"/>
<dbReference type="KEGG" id="nfa:NFA_52810"/>
<dbReference type="eggNOG" id="COG0688">
    <property type="taxonomic scope" value="Bacteria"/>
</dbReference>
<dbReference type="HOGENOM" id="CLU_072492_0_0_11"/>
<dbReference type="OrthoDB" id="9790893at2"/>
<dbReference type="UniPathway" id="UPA00558">
    <property type="reaction ID" value="UER00616"/>
</dbReference>
<dbReference type="Proteomes" id="UP000006820">
    <property type="component" value="Chromosome"/>
</dbReference>
<dbReference type="GO" id="GO:0005886">
    <property type="term" value="C:plasma membrane"/>
    <property type="evidence" value="ECO:0007669"/>
    <property type="project" value="UniProtKB-SubCell"/>
</dbReference>
<dbReference type="GO" id="GO:0004609">
    <property type="term" value="F:phosphatidylserine decarboxylase activity"/>
    <property type="evidence" value="ECO:0007669"/>
    <property type="project" value="UniProtKB-UniRule"/>
</dbReference>
<dbReference type="GO" id="GO:0006646">
    <property type="term" value="P:phosphatidylethanolamine biosynthetic process"/>
    <property type="evidence" value="ECO:0007669"/>
    <property type="project" value="UniProtKB-UniRule"/>
</dbReference>
<dbReference type="HAMAP" id="MF_00664">
    <property type="entry name" value="PS_decarb_PSD_A"/>
    <property type="match status" value="1"/>
</dbReference>
<dbReference type="InterPro" id="IPR003817">
    <property type="entry name" value="PS_Dcarbxylase"/>
</dbReference>
<dbReference type="InterPro" id="IPR033175">
    <property type="entry name" value="PSD-A"/>
</dbReference>
<dbReference type="NCBIfam" id="NF003679">
    <property type="entry name" value="PRK05305.1-3"/>
    <property type="match status" value="1"/>
</dbReference>
<dbReference type="PANTHER" id="PTHR35809">
    <property type="entry name" value="ARCHAETIDYLSERINE DECARBOXYLASE PROENZYME-RELATED"/>
    <property type="match status" value="1"/>
</dbReference>
<dbReference type="PANTHER" id="PTHR35809:SF1">
    <property type="entry name" value="ARCHAETIDYLSERINE DECARBOXYLASE PROENZYME-RELATED"/>
    <property type="match status" value="1"/>
</dbReference>
<dbReference type="Pfam" id="PF02666">
    <property type="entry name" value="PS_Dcarbxylase"/>
    <property type="match status" value="1"/>
</dbReference>
<accession>Q5YNV8</accession>
<sequence length="237" mass="24940">MARRPTPPGTPETTGVGHVVDLVRASIPPLHPAGLPFVAVPLAVAVAAGKRKWVRRAGLATAAACAGFFRHPNRVPPNRPGVVVAPADGEIALVDTASPPAELGLGDQPLPRVSIFLSVLDVHVQRTPVSGVVREVRHQSGQFRSADLPEASAVNERNSMLLETQSGQQIVVVQIAGLLARRIVCDARVGDVLTIGDTYGLIRFGSRVDTYFPVGTELLVQPGQRTIGGETVLATLS</sequence>
<name>PSD_NOCFA</name>
<keyword id="KW-1003">Cell membrane</keyword>
<keyword id="KW-0210">Decarboxylase</keyword>
<keyword id="KW-0444">Lipid biosynthesis</keyword>
<keyword id="KW-0443">Lipid metabolism</keyword>
<keyword id="KW-0456">Lyase</keyword>
<keyword id="KW-0472">Membrane</keyword>
<keyword id="KW-0594">Phospholipid biosynthesis</keyword>
<keyword id="KW-1208">Phospholipid metabolism</keyword>
<keyword id="KW-0670">Pyruvate</keyword>
<keyword id="KW-1185">Reference proteome</keyword>
<keyword id="KW-0865">Zymogen</keyword>
<proteinExistence type="inferred from homology"/>
<protein>
    <recommendedName>
        <fullName evidence="1">Phosphatidylserine decarboxylase proenzyme</fullName>
        <ecNumber evidence="1">4.1.1.65</ecNumber>
    </recommendedName>
    <component>
        <recommendedName>
            <fullName evidence="1">Phosphatidylserine decarboxylase alpha chain</fullName>
        </recommendedName>
    </component>
    <component>
        <recommendedName>
            <fullName evidence="1">Phosphatidylserine decarboxylase beta chain</fullName>
        </recommendedName>
    </component>
</protein>
<reference key="1">
    <citation type="journal article" date="2004" name="Proc. Natl. Acad. Sci. U.S.A.">
        <title>The complete genomic sequence of Nocardia farcinica IFM 10152.</title>
        <authorList>
            <person name="Ishikawa J."/>
            <person name="Yamashita A."/>
            <person name="Mikami Y."/>
            <person name="Hoshino Y."/>
            <person name="Kurita H."/>
            <person name="Hotta K."/>
            <person name="Shiba T."/>
            <person name="Hattori M."/>
        </authorList>
    </citation>
    <scope>NUCLEOTIDE SEQUENCE [LARGE SCALE GENOMIC DNA]</scope>
    <source>
        <strain>IFM 10152</strain>
    </source>
</reference>
<evidence type="ECO:0000255" key="1">
    <source>
        <dbReference type="HAMAP-Rule" id="MF_00664"/>
    </source>
</evidence>